<gene>
    <name type="ORF">IIV3-075R</name>
</gene>
<dbReference type="EMBL" id="DQ643392">
    <property type="protein sequence ID" value="ABF82105.1"/>
    <property type="molecule type" value="Genomic_DNA"/>
</dbReference>
<dbReference type="RefSeq" id="YP_654647.1">
    <property type="nucleotide sequence ID" value="NC_008187.1"/>
</dbReference>
<dbReference type="KEGG" id="vg:4156286"/>
<dbReference type="Proteomes" id="UP000001358">
    <property type="component" value="Genome"/>
</dbReference>
<dbReference type="Gene3D" id="3.90.1600.10">
    <property type="entry name" value="Palm domain of DNA polymerase"/>
    <property type="match status" value="1"/>
</dbReference>
<dbReference type="InterPro" id="IPR043502">
    <property type="entry name" value="DNA/RNA_pol_sf"/>
</dbReference>
<dbReference type="InterPro" id="IPR023211">
    <property type="entry name" value="DNA_pol_palm_dom_sf"/>
</dbReference>
<dbReference type="SUPFAM" id="SSF56672">
    <property type="entry name" value="DNA/RNA polymerases"/>
    <property type="match status" value="1"/>
</dbReference>
<proteinExistence type="predicted"/>
<name>075R_IIV3</name>
<protein>
    <recommendedName>
        <fullName>Uncharacterized protein 075R</fullName>
    </recommendedName>
</protein>
<organismHost>
    <name type="scientific">Aedes vexans</name>
    <name type="common">Inland floodwater mosquito</name>
    <name type="synonym">Culex vexans</name>
    <dbReference type="NCBI Taxonomy" id="7163"/>
</organismHost>
<organismHost>
    <name type="scientific">Culex territans</name>
    <dbReference type="NCBI Taxonomy" id="42431"/>
</organismHost>
<organismHost>
    <name type="scientific">Culiseta annulata</name>
    <dbReference type="NCBI Taxonomy" id="332058"/>
</organismHost>
<organismHost>
    <name type="scientific">Ochlerotatus sollicitans</name>
    <name type="common">eastern saltmarsh mosquito</name>
    <dbReference type="NCBI Taxonomy" id="310513"/>
</organismHost>
<organismHost>
    <name type="scientific">Ochlerotatus taeniorhynchus</name>
    <name type="common">Black salt marsh mosquito</name>
    <name type="synonym">Aedes taeniorhynchus</name>
    <dbReference type="NCBI Taxonomy" id="329105"/>
</organismHost>
<organismHost>
    <name type="scientific">Psorophora ferox</name>
    <dbReference type="NCBI Taxonomy" id="7183"/>
</organismHost>
<feature type="chain" id="PRO_0000377804" description="Uncharacterized protein 075R">
    <location>
        <begin position="1"/>
        <end position="158"/>
    </location>
</feature>
<accession>Q196Y5</accession>
<reference key="1">
    <citation type="journal article" date="2006" name="J. Virol.">
        <title>Genome of invertebrate iridescent virus type 3 (mosquito iridescent virus).</title>
        <authorList>
            <person name="Delhon G."/>
            <person name="Tulman E.R."/>
            <person name="Afonso C.L."/>
            <person name="Lu Z."/>
            <person name="Becnel J.J."/>
            <person name="Moser B.A."/>
            <person name="Kutish G.F."/>
            <person name="Rock D.L."/>
        </authorList>
    </citation>
    <scope>NUCLEOTIDE SEQUENCE [LARGE SCALE GENOMIC DNA]</scope>
</reference>
<sequence length="158" mass="18191">MRETAKLILNSAFGKMIQKVIEDETNLISNAYSLRTFRDKFDSGYDLFQVSSHIDLIKGRLGKVDYSTSKPQHIGLFILDYTKKKMYDEIFSQTKVYYSDTDSALIEKSELLRLQQQGILKIGTDLGEYDVEMDDIGWLKVSTINTEDLNQPKAHDHL</sequence>
<organism>
    <name type="scientific">Invertebrate iridescent virus 3</name>
    <name type="common">IIV-3</name>
    <name type="synonym">Mosquito iridescent virus</name>
    <dbReference type="NCBI Taxonomy" id="345201"/>
    <lineage>
        <taxon>Viruses</taxon>
        <taxon>Varidnaviria</taxon>
        <taxon>Bamfordvirae</taxon>
        <taxon>Nucleocytoviricota</taxon>
        <taxon>Megaviricetes</taxon>
        <taxon>Pimascovirales</taxon>
        <taxon>Iridoviridae</taxon>
        <taxon>Betairidovirinae</taxon>
        <taxon>Chloriridovirus</taxon>
    </lineage>
</organism>
<keyword id="KW-1185">Reference proteome</keyword>